<dbReference type="EC" id="2.7.1.71" evidence="1"/>
<dbReference type="EMBL" id="CP000503">
    <property type="protein sequence ID" value="ABM26652.1"/>
    <property type="molecule type" value="Genomic_DNA"/>
</dbReference>
<dbReference type="RefSeq" id="WP_011791077.1">
    <property type="nucleotide sequence ID" value="NC_008750.1"/>
</dbReference>
<dbReference type="SMR" id="A1RPQ7"/>
<dbReference type="GeneID" id="67445201"/>
<dbReference type="KEGG" id="shw:Sputw3181_3847"/>
<dbReference type="HOGENOM" id="CLU_057607_2_2_6"/>
<dbReference type="UniPathway" id="UPA00053">
    <property type="reaction ID" value="UER00088"/>
</dbReference>
<dbReference type="Proteomes" id="UP000002597">
    <property type="component" value="Chromosome"/>
</dbReference>
<dbReference type="GO" id="GO:0005829">
    <property type="term" value="C:cytosol"/>
    <property type="evidence" value="ECO:0007669"/>
    <property type="project" value="TreeGrafter"/>
</dbReference>
<dbReference type="GO" id="GO:0005524">
    <property type="term" value="F:ATP binding"/>
    <property type="evidence" value="ECO:0007669"/>
    <property type="project" value="UniProtKB-UniRule"/>
</dbReference>
<dbReference type="GO" id="GO:0000287">
    <property type="term" value="F:magnesium ion binding"/>
    <property type="evidence" value="ECO:0007669"/>
    <property type="project" value="UniProtKB-UniRule"/>
</dbReference>
<dbReference type="GO" id="GO:0004765">
    <property type="term" value="F:shikimate kinase activity"/>
    <property type="evidence" value="ECO:0007669"/>
    <property type="project" value="UniProtKB-UniRule"/>
</dbReference>
<dbReference type="GO" id="GO:0008652">
    <property type="term" value="P:amino acid biosynthetic process"/>
    <property type="evidence" value="ECO:0007669"/>
    <property type="project" value="UniProtKB-KW"/>
</dbReference>
<dbReference type="GO" id="GO:0009073">
    <property type="term" value="P:aromatic amino acid family biosynthetic process"/>
    <property type="evidence" value="ECO:0007669"/>
    <property type="project" value="UniProtKB-KW"/>
</dbReference>
<dbReference type="GO" id="GO:0009423">
    <property type="term" value="P:chorismate biosynthetic process"/>
    <property type="evidence" value="ECO:0007669"/>
    <property type="project" value="UniProtKB-UniRule"/>
</dbReference>
<dbReference type="CDD" id="cd00464">
    <property type="entry name" value="SK"/>
    <property type="match status" value="1"/>
</dbReference>
<dbReference type="FunFam" id="3.40.50.300:FF:000099">
    <property type="entry name" value="Shikimate kinase 1"/>
    <property type="match status" value="1"/>
</dbReference>
<dbReference type="Gene3D" id="3.40.50.300">
    <property type="entry name" value="P-loop containing nucleotide triphosphate hydrolases"/>
    <property type="match status" value="1"/>
</dbReference>
<dbReference type="HAMAP" id="MF_00109">
    <property type="entry name" value="Shikimate_kinase"/>
    <property type="match status" value="1"/>
</dbReference>
<dbReference type="InterPro" id="IPR027417">
    <property type="entry name" value="P-loop_NTPase"/>
</dbReference>
<dbReference type="InterPro" id="IPR031322">
    <property type="entry name" value="Shikimate/glucono_kinase"/>
</dbReference>
<dbReference type="InterPro" id="IPR000623">
    <property type="entry name" value="Shikimate_kinase/TSH1"/>
</dbReference>
<dbReference type="InterPro" id="IPR023000">
    <property type="entry name" value="Shikimate_kinase_CS"/>
</dbReference>
<dbReference type="NCBIfam" id="NF003456">
    <property type="entry name" value="PRK05057.1"/>
    <property type="match status" value="1"/>
</dbReference>
<dbReference type="PANTHER" id="PTHR21087">
    <property type="entry name" value="SHIKIMATE KINASE"/>
    <property type="match status" value="1"/>
</dbReference>
<dbReference type="PANTHER" id="PTHR21087:SF16">
    <property type="entry name" value="SHIKIMATE KINASE 1, CHLOROPLASTIC"/>
    <property type="match status" value="1"/>
</dbReference>
<dbReference type="Pfam" id="PF01202">
    <property type="entry name" value="SKI"/>
    <property type="match status" value="1"/>
</dbReference>
<dbReference type="PRINTS" id="PR01100">
    <property type="entry name" value="SHIKIMTKNASE"/>
</dbReference>
<dbReference type="SUPFAM" id="SSF52540">
    <property type="entry name" value="P-loop containing nucleoside triphosphate hydrolases"/>
    <property type="match status" value="1"/>
</dbReference>
<dbReference type="PROSITE" id="PS01128">
    <property type="entry name" value="SHIKIMATE_KINASE"/>
    <property type="match status" value="1"/>
</dbReference>
<reference key="1">
    <citation type="submission" date="2006-12" db="EMBL/GenBank/DDBJ databases">
        <title>Complete sequence of Shewanella sp. W3-18-1.</title>
        <authorList>
            <consortium name="US DOE Joint Genome Institute"/>
            <person name="Copeland A."/>
            <person name="Lucas S."/>
            <person name="Lapidus A."/>
            <person name="Barry K."/>
            <person name="Detter J.C."/>
            <person name="Glavina del Rio T."/>
            <person name="Hammon N."/>
            <person name="Israni S."/>
            <person name="Dalin E."/>
            <person name="Tice H."/>
            <person name="Pitluck S."/>
            <person name="Chain P."/>
            <person name="Malfatti S."/>
            <person name="Shin M."/>
            <person name="Vergez L."/>
            <person name="Schmutz J."/>
            <person name="Larimer F."/>
            <person name="Land M."/>
            <person name="Hauser L."/>
            <person name="Kyrpides N."/>
            <person name="Lykidis A."/>
            <person name="Tiedje J."/>
            <person name="Richardson P."/>
        </authorList>
    </citation>
    <scope>NUCLEOTIDE SEQUENCE [LARGE SCALE GENOMIC DNA]</scope>
    <source>
        <strain>W3-18-1</strain>
    </source>
</reference>
<sequence>MAEKRNIFLVGPMGAGKSTIGRHLAQMLHLEFHDSDQEIEQRTGADIAWVFDVEGEEGFRRREAQVIADLSEKQGIVLATGGGSVQSKDIRNHLSARGIVVYLETTIDKQVARTQRDKRRPLLQVDDPREVLESLAEIRNPLYEEIADVIVKTDDQSAKIVANQIIEKLGF</sequence>
<organism>
    <name type="scientific">Shewanella sp. (strain W3-18-1)</name>
    <dbReference type="NCBI Taxonomy" id="351745"/>
    <lineage>
        <taxon>Bacteria</taxon>
        <taxon>Pseudomonadati</taxon>
        <taxon>Pseudomonadota</taxon>
        <taxon>Gammaproteobacteria</taxon>
        <taxon>Alteromonadales</taxon>
        <taxon>Shewanellaceae</taxon>
        <taxon>Shewanella</taxon>
    </lineage>
</organism>
<name>AROK_SHESW</name>
<proteinExistence type="inferred from homology"/>
<accession>A1RPQ7</accession>
<feature type="chain" id="PRO_1000023002" description="Shikimate kinase">
    <location>
        <begin position="1"/>
        <end position="171"/>
    </location>
</feature>
<feature type="binding site" evidence="1">
    <location>
        <begin position="14"/>
        <end position="19"/>
    </location>
    <ligand>
        <name>ATP</name>
        <dbReference type="ChEBI" id="CHEBI:30616"/>
    </ligand>
</feature>
<feature type="binding site" evidence="1">
    <location>
        <position position="18"/>
    </location>
    <ligand>
        <name>Mg(2+)</name>
        <dbReference type="ChEBI" id="CHEBI:18420"/>
    </ligand>
</feature>
<feature type="binding site" evidence="1">
    <location>
        <position position="36"/>
    </location>
    <ligand>
        <name>substrate</name>
    </ligand>
</feature>
<feature type="binding site" evidence="1">
    <location>
        <position position="60"/>
    </location>
    <ligand>
        <name>substrate</name>
    </ligand>
</feature>
<feature type="binding site" evidence="1">
    <location>
        <position position="82"/>
    </location>
    <ligand>
        <name>substrate</name>
    </ligand>
</feature>
<feature type="binding site" evidence="1">
    <location>
        <position position="120"/>
    </location>
    <ligand>
        <name>ATP</name>
        <dbReference type="ChEBI" id="CHEBI:30616"/>
    </ligand>
</feature>
<feature type="binding site" evidence="1">
    <location>
        <position position="139"/>
    </location>
    <ligand>
        <name>substrate</name>
    </ligand>
</feature>
<feature type="binding site" evidence="1">
    <location>
        <position position="156"/>
    </location>
    <ligand>
        <name>ATP</name>
        <dbReference type="ChEBI" id="CHEBI:30616"/>
    </ligand>
</feature>
<gene>
    <name evidence="1" type="primary">aroK</name>
    <name type="ordered locus">Sputw3181_3847</name>
</gene>
<comment type="function">
    <text evidence="1">Catalyzes the specific phosphorylation of the 3-hydroxyl group of shikimic acid using ATP as a cosubstrate.</text>
</comment>
<comment type="catalytic activity">
    <reaction evidence="1">
        <text>shikimate + ATP = 3-phosphoshikimate + ADP + H(+)</text>
        <dbReference type="Rhea" id="RHEA:13121"/>
        <dbReference type="ChEBI" id="CHEBI:15378"/>
        <dbReference type="ChEBI" id="CHEBI:30616"/>
        <dbReference type="ChEBI" id="CHEBI:36208"/>
        <dbReference type="ChEBI" id="CHEBI:145989"/>
        <dbReference type="ChEBI" id="CHEBI:456216"/>
        <dbReference type="EC" id="2.7.1.71"/>
    </reaction>
</comment>
<comment type="cofactor">
    <cofactor evidence="1">
        <name>Mg(2+)</name>
        <dbReference type="ChEBI" id="CHEBI:18420"/>
    </cofactor>
    <text evidence="1">Binds 1 Mg(2+) ion per subunit.</text>
</comment>
<comment type="pathway">
    <text evidence="1">Metabolic intermediate biosynthesis; chorismate biosynthesis; chorismate from D-erythrose 4-phosphate and phosphoenolpyruvate: step 5/7.</text>
</comment>
<comment type="subunit">
    <text evidence="1">Monomer.</text>
</comment>
<comment type="subcellular location">
    <subcellularLocation>
        <location evidence="1">Cytoplasm</location>
    </subcellularLocation>
</comment>
<comment type="similarity">
    <text evidence="1">Belongs to the shikimate kinase family.</text>
</comment>
<keyword id="KW-0028">Amino-acid biosynthesis</keyword>
<keyword id="KW-0057">Aromatic amino acid biosynthesis</keyword>
<keyword id="KW-0067">ATP-binding</keyword>
<keyword id="KW-0963">Cytoplasm</keyword>
<keyword id="KW-0418">Kinase</keyword>
<keyword id="KW-0460">Magnesium</keyword>
<keyword id="KW-0479">Metal-binding</keyword>
<keyword id="KW-0547">Nucleotide-binding</keyword>
<keyword id="KW-0808">Transferase</keyword>
<evidence type="ECO:0000255" key="1">
    <source>
        <dbReference type="HAMAP-Rule" id="MF_00109"/>
    </source>
</evidence>
<protein>
    <recommendedName>
        <fullName evidence="1">Shikimate kinase</fullName>
        <shortName evidence="1">SK</shortName>
        <ecNumber evidence="1">2.7.1.71</ecNumber>
    </recommendedName>
</protein>